<reference key="1">
    <citation type="journal article" date="2006" name="J. Bacteriol.">
        <title>Complete genome sequence of Yersinia pestis strains Antiqua and Nepal516: evidence of gene reduction in an emerging pathogen.</title>
        <authorList>
            <person name="Chain P.S.G."/>
            <person name="Hu P."/>
            <person name="Malfatti S.A."/>
            <person name="Radnedge L."/>
            <person name="Larimer F."/>
            <person name="Vergez L.M."/>
            <person name="Worsham P."/>
            <person name="Chu M.C."/>
            <person name="Andersen G.L."/>
        </authorList>
    </citation>
    <scope>NUCLEOTIDE SEQUENCE [LARGE SCALE GENOMIC DNA]</scope>
    <source>
        <strain>Nepal516</strain>
    </source>
</reference>
<reference key="2">
    <citation type="submission" date="2009-04" db="EMBL/GenBank/DDBJ databases">
        <title>Yersinia pestis Nepal516A whole genome shotgun sequencing project.</title>
        <authorList>
            <person name="Plunkett G. III"/>
            <person name="Anderson B.D."/>
            <person name="Baumler D.J."/>
            <person name="Burland V."/>
            <person name="Cabot E.L."/>
            <person name="Glasner J.D."/>
            <person name="Mau B."/>
            <person name="Neeno-Eckwall E."/>
            <person name="Perna N.T."/>
            <person name="Munk A.C."/>
            <person name="Tapia R."/>
            <person name="Green L.D."/>
            <person name="Rogers Y.C."/>
            <person name="Detter J.C."/>
            <person name="Bruce D.C."/>
            <person name="Brettin T.S."/>
        </authorList>
    </citation>
    <scope>NUCLEOTIDE SEQUENCE [LARGE SCALE GENOMIC DNA]</scope>
    <source>
        <strain>Nepal516</strain>
    </source>
</reference>
<accession>Q1CGT4</accession>
<accession>C4GVF0</accession>
<evidence type="ECO:0000255" key="1">
    <source>
        <dbReference type="HAMAP-Rule" id="MF_01619"/>
    </source>
</evidence>
<protein>
    <recommendedName>
        <fullName evidence="1">NAD-dependent malic enzyme</fullName>
        <shortName evidence="1">NAD-ME</shortName>
        <ecNumber evidence="1">1.1.1.38</ecNumber>
    </recommendedName>
</protein>
<comment type="catalytic activity">
    <reaction evidence="1">
        <text>(S)-malate + NAD(+) = pyruvate + CO2 + NADH</text>
        <dbReference type="Rhea" id="RHEA:12653"/>
        <dbReference type="ChEBI" id="CHEBI:15361"/>
        <dbReference type="ChEBI" id="CHEBI:15589"/>
        <dbReference type="ChEBI" id="CHEBI:16526"/>
        <dbReference type="ChEBI" id="CHEBI:57540"/>
        <dbReference type="ChEBI" id="CHEBI:57945"/>
        <dbReference type="EC" id="1.1.1.38"/>
    </reaction>
</comment>
<comment type="catalytic activity">
    <reaction evidence="1">
        <text>oxaloacetate + H(+) = pyruvate + CO2</text>
        <dbReference type="Rhea" id="RHEA:15641"/>
        <dbReference type="ChEBI" id="CHEBI:15361"/>
        <dbReference type="ChEBI" id="CHEBI:15378"/>
        <dbReference type="ChEBI" id="CHEBI:16452"/>
        <dbReference type="ChEBI" id="CHEBI:16526"/>
        <dbReference type="EC" id="1.1.1.38"/>
    </reaction>
</comment>
<comment type="cofactor">
    <cofactor evidence="1">
        <name>Mg(2+)</name>
        <dbReference type="ChEBI" id="CHEBI:18420"/>
    </cofactor>
    <cofactor evidence="1">
        <name>Mn(2+)</name>
        <dbReference type="ChEBI" id="CHEBI:29035"/>
    </cofactor>
    <text evidence="1">Divalent metal cations. Prefers magnesium or manganese.</text>
</comment>
<comment type="subunit">
    <text evidence="1">Homotetramer.</text>
</comment>
<comment type="similarity">
    <text evidence="1">Belongs to the malic enzymes family.</text>
</comment>
<organism>
    <name type="scientific">Yersinia pestis bv. Antiqua (strain Nepal516)</name>
    <dbReference type="NCBI Taxonomy" id="377628"/>
    <lineage>
        <taxon>Bacteria</taxon>
        <taxon>Pseudomonadati</taxon>
        <taxon>Pseudomonadota</taxon>
        <taxon>Gammaproteobacteria</taxon>
        <taxon>Enterobacterales</taxon>
        <taxon>Yersiniaceae</taxon>
        <taxon>Yersinia</taxon>
    </lineage>
</organism>
<sequence>MELEYESKRPLYIPYAGPILLEFPLLNKGSAFTNDERNHFNLHGLLPEAVETIEEQAERAYRQYQDFKNDDDKHIYLRNIQDTNETLFYRLLEAHLSEMMPIIYTPTVGEACEHFSDIYRRARGLFISYPNREHIDDMLQNATKQNVKVIVVTDGERILGLGDQGIGGMGIPIGKLSLYTACGGISPAYTLPVVLDVGTNNPQRLNDPLYMGWRHPRISGDEYYAFVDEFIQAVKRRWPNVLLQFEDFAQKNATPLLNRYRDELCCFNDDIQGTAAVTLGSLIAASHAAGSQLRDQTVTFLGAGSAGCGIAEQIIAQMMSEGLSEIQARARIFMVDRFGLLTDKLPNLLDFQSKLVQKSDDLHHWNLHNDAISLLDVVRNAKPTVLIGVSGQPGLFTEELIREMHSHCARPIVMPLSNPTSRVEARPEDIINWTDGAALVATGSPFPPVSYKEKLYPIAQCNNSYIFPGIGLGVLASGASRVTDGMLMAASRALAESSPLARHGEGALLPNIDDIQAVSKAIAMRVGQAAQLQGVAIVTSEEALSKAIEHNYWQPQYRSYKRTSF</sequence>
<name>MAO1_YERPN</name>
<gene>
    <name evidence="1" type="primary">maeA</name>
    <name type="ordered locus">YPN_2468</name>
    <name type="ORF">YP516_2781</name>
</gene>
<keyword id="KW-0479">Metal-binding</keyword>
<keyword id="KW-0520">NAD</keyword>
<keyword id="KW-0560">Oxidoreductase</keyword>
<feature type="chain" id="PRO_1000069555" description="NAD-dependent malic enzyme">
    <location>
        <begin position="1"/>
        <end position="565"/>
    </location>
</feature>
<feature type="active site" description="Proton donor" evidence="1">
    <location>
        <position position="104"/>
    </location>
</feature>
<feature type="active site" description="Proton acceptor" evidence="1">
    <location>
        <position position="175"/>
    </location>
</feature>
<feature type="binding site" evidence="1">
    <location>
        <position position="157"/>
    </location>
    <ligand>
        <name>NAD(+)</name>
        <dbReference type="ChEBI" id="CHEBI:57540"/>
    </ligand>
</feature>
<feature type="binding site" evidence="1">
    <location>
        <position position="246"/>
    </location>
    <ligand>
        <name>a divalent metal cation</name>
        <dbReference type="ChEBI" id="CHEBI:60240"/>
    </ligand>
</feature>
<feature type="binding site" evidence="1">
    <location>
        <position position="247"/>
    </location>
    <ligand>
        <name>a divalent metal cation</name>
        <dbReference type="ChEBI" id="CHEBI:60240"/>
    </ligand>
</feature>
<feature type="binding site" evidence="1">
    <location>
        <position position="270"/>
    </location>
    <ligand>
        <name>a divalent metal cation</name>
        <dbReference type="ChEBI" id="CHEBI:60240"/>
    </ligand>
</feature>
<feature type="binding site" evidence="1">
    <location>
        <position position="270"/>
    </location>
    <ligand>
        <name>NAD(+)</name>
        <dbReference type="ChEBI" id="CHEBI:57540"/>
    </ligand>
</feature>
<feature type="binding site" evidence="1">
    <location>
        <position position="418"/>
    </location>
    <ligand>
        <name>NAD(+)</name>
        <dbReference type="ChEBI" id="CHEBI:57540"/>
    </ligand>
</feature>
<feature type="site" description="Important for activity" evidence="1">
    <location>
        <position position="270"/>
    </location>
</feature>
<dbReference type="EC" id="1.1.1.38" evidence="1"/>
<dbReference type="EMBL" id="CP000305">
    <property type="protein sequence ID" value="ABG18796.1"/>
    <property type="molecule type" value="Genomic_DNA"/>
</dbReference>
<dbReference type="EMBL" id="ACNQ01000014">
    <property type="protein sequence ID" value="EEO76034.1"/>
    <property type="molecule type" value="Genomic_DNA"/>
</dbReference>
<dbReference type="RefSeq" id="WP_002211968.1">
    <property type="nucleotide sequence ID" value="NZ_ACNQ01000014.1"/>
</dbReference>
<dbReference type="SMR" id="Q1CGT4"/>
<dbReference type="KEGG" id="ypn:YPN_2468"/>
<dbReference type="HOGENOM" id="CLU_011405_5_2_6"/>
<dbReference type="Proteomes" id="UP000008936">
    <property type="component" value="Chromosome"/>
</dbReference>
<dbReference type="GO" id="GO:0005829">
    <property type="term" value="C:cytosol"/>
    <property type="evidence" value="ECO:0007669"/>
    <property type="project" value="TreeGrafter"/>
</dbReference>
<dbReference type="GO" id="GO:0004471">
    <property type="term" value="F:malate dehydrogenase (decarboxylating) (NAD+) activity"/>
    <property type="evidence" value="ECO:0007669"/>
    <property type="project" value="UniProtKB-UniRule"/>
</dbReference>
<dbReference type="GO" id="GO:0046872">
    <property type="term" value="F:metal ion binding"/>
    <property type="evidence" value="ECO:0007669"/>
    <property type="project" value="UniProtKB-KW"/>
</dbReference>
<dbReference type="GO" id="GO:0051287">
    <property type="term" value="F:NAD binding"/>
    <property type="evidence" value="ECO:0007669"/>
    <property type="project" value="InterPro"/>
</dbReference>
<dbReference type="GO" id="GO:0008948">
    <property type="term" value="F:oxaloacetate decarboxylase activity"/>
    <property type="evidence" value="ECO:0007669"/>
    <property type="project" value="UniProtKB-UniRule"/>
</dbReference>
<dbReference type="GO" id="GO:0006108">
    <property type="term" value="P:malate metabolic process"/>
    <property type="evidence" value="ECO:0007669"/>
    <property type="project" value="TreeGrafter"/>
</dbReference>
<dbReference type="CDD" id="cd05312">
    <property type="entry name" value="NAD_bind_1_malic_enz"/>
    <property type="match status" value="1"/>
</dbReference>
<dbReference type="FunFam" id="3.40.50.10380:FF:000001">
    <property type="entry name" value="NAD-dependent malic enzyme"/>
    <property type="match status" value="1"/>
</dbReference>
<dbReference type="FunFam" id="3.40.50.720:FF:000055">
    <property type="entry name" value="NAD-dependent malic enzyme"/>
    <property type="match status" value="1"/>
</dbReference>
<dbReference type="Gene3D" id="3.40.50.10380">
    <property type="entry name" value="Malic enzyme, N-terminal domain"/>
    <property type="match status" value="1"/>
</dbReference>
<dbReference type="Gene3D" id="3.40.50.720">
    <property type="entry name" value="NAD(P)-binding Rossmann-like Domain"/>
    <property type="match status" value="1"/>
</dbReference>
<dbReference type="HAMAP" id="MF_01619">
    <property type="entry name" value="NAD_malic_enz"/>
    <property type="match status" value="1"/>
</dbReference>
<dbReference type="InterPro" id="IPR046346">
    <property type="entry name" value="Aminoacid_DH-like_N_sf"/>
</dbReference>
<dbReference type="InterPro" id="IPR015884">
    <property type="entry name" value="Malic_enzyme_CS"/>
</dbReference>
<dbReference type="InterPro" id="IPR012301">
    <property type="entry name" value="Malic_N_dom"/>
</dbReference>
<dbReference type="InterPro" id="IPR037062">
    <property type="entry name" value="Malic_N_dom_sf"/>
</dbReference>
<dbReference type="InterPro" id="IPR012302">
    <property type="entry name" value="Malic_NAD-bd"/>
</dbReference>
<dbReference type="InterPro" id="IPR001891">
    <property type="entry name" value="Malic_OxRdtase"/>
</dbReference>
<dbReference type="InterPro" id="IPR036291">
    <property type="entry name" value="NAD(P)-bd_dom_sf"/>
</dbReference>
<dbReference type="InterPro" id="IPR023667">
    <property type="entry name" value="NAD_malic_enz_proteobac"/>
</dbReference>
<dbReference type="NCBIfam" id="NF010052">
    <property type="entry name" value="PRK13529.1"/>
    <property type="match status" value="1"/>
</dbReference>
<dbReference type="PANTHER" id="PTHR23406">
    <property type="entry name" value="MALIC ENZYME-RELATED"/>
    <property type="match status" value="1"/>
</dbReference>
<dbReference type="PANTHER" id="PTHR23406:SF34">
    <property type="entry name" value="NAD-DEPENDENT MALIC ENZYME, MITOCHONDRIAL"/>
    <property type="match status" value="1"/>
</dbReference>
<dbReference type="Pfam" id="PF00390">
    <property type="entry name" value="malic"/>
    <property type="match status" value="1"/>
</dbReference>
<dbReference type="Pfam" id="PF03949">
    <property type="entry name" value="Malic_M"/>
    <property type="match status" value="1"/>
</dbReference>
<dbReference type="PIRSF" id="PIRSF000106">
    <property type="entry name" value="ME"/>
    <property type="match status" value="1"/>
</dbReference>
<dbReference type="PRINTS" id="PR00072">
    <property type="entry name" value="MALOXRDTASE"/>
</dbReference>
<dbReference type="SMART" id="SM01274">
    <property type="entry name" value="malic"/>
    <property type="match status" value="1"/>
</dbReference>
<dbReference type="SMART" id="SM00919">
    <property type="entry name" value="Malic_M"/>
    <property type="match status" value="1"/>
</dbReference>
<dbReference type="SUPFAM" id="SSF53223">
    <property type="entry name" value="Aminoacid dehydrogenase-like, N-terminal domain"/>
    <property type="match status" value="1"/>
</dbReference>
<dbReference type="SUPFAM" id="SSF51735">
    <property type="entry name" value="NAD(P)-binding Rossmann-fold domains"/>
    <property type="match status" value="1"/>
</dbReference>
<dbReference type="PROSITE" id="PS00331">
    <property type="entry name" value="MALIC_ENZYMES"/>
    <property type="match status" value="1"/>
</dbReference>
<proteinExistence type="inferred from homology"/>